<reference key="1">
    <citation type="journal article" date="2004" name="Genome Res.">
        <title>The complete genome and proteome of Mycoplasma mobile.</title>
        <authorList>
            <person name="Jaffe J.D."/>
            <person name="Stange-Thomann N."/>
            <person name="Smith C."/>
            <person name="DeCaprio D."/>
            <person name="Fisher S."/>
            <person name="Butler J."/>
            <person name="Calvo S."/>
            <person name="Elkins T."/>
            <person name="FitzGerald M.G."/>
            <person name="Hafez N."/>
            <person name="Kodira C.D."/>
            <person name="Major J."/>
            <person name="Wang S."/>
            <person name="Wilkinson J."/>
            <person name="Nicol R."/>
            <person name="Nusbaum C."/>
            <person name="Birren B."/>
            <person name="Berg H.C."/>
            <person name="Church G.M."/>
        </authorList>
    </citation>
    <scope>NUCLEOTIDE SEQUENCE [LARGE SCALE GENOMIC DNA]</scope>
    <source>
        <strain>ATCC 43663 / NCTC 11711 / 163 K</strain>
    </source>
</reference>
<feature type="chain" id="PRO_0000154668" description="Large ribosomal subunit protein uL10">
    <location>
        <begin position="1"/>
        <end position="167"/>
    </location>
</feature>
<keyword id="KW-1185">Reference proteome</keyword>
<keyword id="KW-0687">Ribonucleoprotein</keyword>
<keyword id="KW-0689">Ribosomal protein</keyword>
<keyword id="KW-0694">RNA-binding</keyword>
<keyword id="KW-0699">rRNA-binding</keyword>
<evidence type="ECO:0000255" key="1">
    <source>
        <dbReference type="HAMAP-Rule" id="MF_00362"/>
    </source>
</evidence>
<evidence type="ECO:0000305" key="2"/>
<sequence length="167" mass="18903">MTENRKKKVATVKTISKLIKNSAGLIVFEYQGLSASELESVRNDLKNHLANTMVFKNRFVKLAIDKAGFKELDSYLFGPNIFVFFDEEHKNATIKKIAEIEKKNKFVKIKAGIYEEKVVSDAEVRVIATLPTYEEALTILARSMLAPLQQVSLGLKMLVDEKHIKAE</sequence>
<name>RL10_MYCM1</name>
<comment type="function">
    <text evidence="1">Forms part of the ribosomal stalk, playing a central role in the interaction of the ribosome with GTP-bound translation factors.</text>
</comment>
<comment type="subunit">
    <text evidence="1">Part of the ribosomal stalk of the 50S ribosomal subunit. The N-terminus interacts with L11 and the large rRNA to form the base of the stalk. The C-terminus forms an elongated spine to which L12 dimers bind in a sequential fashion forming a multimeric L10(L12)X complex.</text>
</comment>
<comment type="similarity">
    <text evidence="1">Belongs to the universal ribosomal protein uL10 family.</text>
</comment>
<dbReference type="EMBL" id="AE017308">
    <property type="protein sequence ID" value="AAT28019.1"/>
    <property type="molecule type" value="Genomic_DNA"/>
</dbReference>
<dbReference type="RefSeq" id="WP_011265053.1">
    <property type="nucleotide sequence ID" value="NC_006908.1"/>
</dbReference>
<dbReference type="SMR" id="Q6KHB1"/>
<dbReference type="STRING" id="267748.MMOB5330"/>
<dbReference type="KEGG" id="mmo:MMOB5330"/>
<dbReference type="eggNOG" id="COG0244">
    <property type="taxonomic scope" value="Bacteria"/>
</dbReference>
<dbReference type="HOGENOM" id="CLU_092227_2_0_14"/>
<dbReference type="OrthoDB" id="9808307at2"/>
<dbReference type="Proteomes" id="UP000009072">
    <property type="component" value="Chromosome"/>
</dbReference>
<dbReference type="GO" id="GO:1990904">
    <property type="term" value="C:ribonucleoprotein complex"/>
    <property type="evidence" value="ECO:0007669"/>
    <property type="project" value="UniProtKB-KW"/>
</dbReference>
<dbReference type="GO" id="GO:0005840">
    <property type="term" value="C:ribosome"/>
    <property type="evidence" value="ECO:0007669"/>
    <property type="project" value="UniProtKB-KW"/>
</dbReference>
<dbReference type="GO" id="GO:0070180">
    <property type="term" value="F:large ribosomal subunit rRNA binding"/>
    <property type="evidence" value="ECO:0007669"/>
    <property type="project" value="UniProtKB-UniRule"/>
</dbReference>
<dbReference type="GO" id="GO:0006412">
    <property type="term" value="P:translation"/>
    <property type="evidence" value="ECO:0007669"/>
    <property type="project" value="UniProtKB-UniRule"/>
</dbReference>
<dbReference type="CDD" id="cd05797">
    <property type="entry name" value="Ribosomal_L10"/>
    <property type="match status" value="1"/>
</dbReference>
<dbReference type="Gene3D" id="3.30.70.1730">
    <property type="match status" value="1"/>
</dbReference>
<dbReference type="HAMAP" id="MF_00362">
    <property type="entry name" value="Ribosomal_uL10"/>
    <property type="match status" value="1"/>
</dbReference>
<dbReference type="InterPro" id="IPR001790">
    <property type="entry name" value="Ribosomal_uL10"/>
</dbReference>
<dbReference type="InterPro" id="IPR043141">
    <property type="entry name" value="Ribosomal_uL10-like_sf"/>
</dbReference>
<dbReference type="InterPro" id="IPR022973">
    <property type="entry name" value="Ribosomal_uL10_bac"/>
</dbReference>
<dbReference type="InterPro" id="IPR047865">
    <property type="entry name" value="Ribosomal_uL10_bac_type"/>
</dbReference>
<dbReference type="NCBIfam" id="NF000955">
    <property type="entry name" value="PRK00099.1-1"/>
    <property type="match status" value="1"/>
</dbReference>
<dbReference type="PANTHER" id="PTHR11560">
    <property type="entry name" value="39S RIBOSOMAL PROTEIN L10, MITOCHONDRIAL"/>
    <property type="match status" value="1"/>
</dbReference>
<dbReference type="Pfam" id="PF00466">
    <property type="entry name" value="Ribosomal_L10"/>
    <property type="match status" value="1"/>
</dbReference>
<dbReference type="SUPFAM" id="SSF160369">
    <property type="entry name" value="Ribosomal protein L10-like"/>
    <property type="match status" value="1"/>
</dbReference>
<protein>
    <recommendedName>
        <fullName evidence="1">Large ribosomal subunit protein uL10</fullName>
    </recommendedName>
    <alternativeName>
        <fullName evidence="2">50S ribosomal protein L10</fullName>
    </alternativeName>
</protein>
<gene>
    <name evidence="1" type="primary">rplJ</name>
    <name type="ordered locus">MMOB5330</name>
</gene>
<accession>Q6KHB1</accession>
<organism>
    <name type="scientific">Mycoplasma mobile (strain ATCC 43663 / 163K / NCTC 11711)</name>
    <name type="common">Mesomycoplasma mobile</name>
    <dbReference type="NCBI Taxonomy" id="267748"/>
    <lineage>
        <taxon>Bacteria</taxon>
        <taxon>Bacillati</taxon>
        <taxon>Mycoplasmatota</taxon>
        <taxon>Mycoplasmoidales</taxon>
        <taxon>Metamycoplasmataceae</taxon>
        <taxon>Mesomycoplasma</taxon>
    </lineage>
</organism>
<proteinExistence type="inferred from homology"/>